<name>TONB_KLEPN</name>
<feature type="chain" id="PRO_0000196200" description="Protein TonB">
    <location>
        <begin position="1"/>
        <end position="243"/>
    </location>
</feature>
<feature type="topological domain" description="Cytoplasmic" evidence="2">
    <location>
        <begin position="1"/>
        <end position="12"/>
    </location>
</feature>
<feature type="transmembrane region" description="Helical; Signal-anchor" evidence="2">
    <location>
        <begin position="13"/>
        <end position="30"/>
    </location>
</feature>
<feature type="topological domain" description="Periplasmic" evidence="2">
    <location>
        <begin position="31"/>
        <end position="243"/>
    </location>
</feature>
<feature type="repeat" description="1-1">
    <location>
        <begin position="69"/>
        <end position="70"/>
    </location>
</feature>
<feature type="repeat" description="1-2">
    <location>
        <begin position="71"/>
        <end position="72"/>
    </location>
</feature>
<feature type="repeat" description="1-3">
    <location>
        <begin position="73"/>
        <end position="74"/>
    </location>
</feature>
<feature type="repeat" description="1-4">
    <location>
        <begin position="75"/>
        <end position="76"/>
    </location>
</feature>
<feature type="repeat" description="1-5; approximate">
    <location>
        <begin position="77"/>
        <end position="78"/>
    </location>
</feature>
<feature type="repeat" description="1-6; approximate">
    <location>
        <begin position="79"/>
        <end position="80"/>
    </location>
</feature>
<feature type="repeat" description="1-7">
    <location>
        <begin position="81"/>
        <end position="82"/>
    </location>
</feature>
<feature type="repeat" description="2-1">
    <location>
        <begin position="91"/>
        <end position="92"/>
    </location>
</feature>
<feature type="repeat" description="2-2; approximate">
    <location>
        <begin position="93"/>
        <end position="94"/>
    </location>
</feature>
<feature type="repeat" description="2-3">
    <location>
        <begin position="95"/>
        <end position="96"/>
    </location>
</feature>
<feature type="repeat" description="2-4">
    <location>
        <begin position="97"/>
        <end position="98"/>
    </location>
</feature>
<feature type="repeat" description="2-5">
    <location>
        <begin position="99"/>
        <end position="100"/>
    </location>
</feature>
<feature type="repeat" description="2-6">
    <location>
        <begin position="101"/>
        <end position="102"/>
    </location>
</feature>
<feature type="repeat" description="2-7">
    <location>
        <begin position="103"/>
        <end position="104"/>
    </location>
</feature>
<feature type="repeat" description="2-8">
    <location>
        <begin position="105"/>
        <end position="106"/>
    </location>
</feature>
<feature type="domain" description="TonB C-terminal" evidence="3">
    <location>
        <begin position="153"/>
        <end position="243"/>
    </location>
</feature>
<feature type="region of interest" description="Disordered" evidence="4">
    <location>
        <begin position="53"/>
        <end position="163"/>
    </location>
</feature>
<feature type="region of interest" description="7 X 2 AA approximate tandem repeats of E-P">
    <location>
        <begin position="69"/>
        <end position="82"/>
    </location>
</feature>
<feature type="region of interest" description="8 X 2 AA approximate tandem repeats of K-P">
    <location>
        <begin position="91"/>
        <end position="106"/>
    </location>
</feature>
<feature type="compositionally biased region" description="Acidic residues" evidence="4">
    <location>
        <begin position="68"/>
        <end position="78"/>
    </location>
</feature>
<feature type="compositionally biased region" description="Basic and acidic residues" evidence="4">
    <location>
        <begin position="82"/>
        <end position="96"/>
    </location>
</feature>
<feature type="compositionally biased region" description="Basic and acidic residues" evidence="4">
    <location>
        <begin position="104"/>
        <end position="121"/>
    </location>
</feature>
<feature type="compositionally biased region" description="Low complexity" evidence="4">
    <location>
        <begin position="134"/>
        <end position="156"/>
    </location>
</feature>
<proteinExistence type="inferred from homology"/>
<organism>
    <name type="scientific">Klebsiella pneumoniae</name>
    <dbReference type="NCBI Taxonomy" id="573"/>
    <lineage>
        <taxon>Bacteria</taxon>
        <taxon>Pseudomonadati</taxon>
        <taxon>Pseudomonadota</taxon>
        <taxon>Gammaproteobacteria</taxon>
        <taxon>Enterobacterales</taxon>
        <taxon>Enterobacteriaceae</taxon>
        <taxon>Klebsiella/Raoultella group</taxon>
        <taxon>Klebsiella</taxon>
        <taxon>Klebsiella pneumoniae complex</taxon>
    </lineage>
</organism>
<reference key="1">
    <citation type="journal article" date="1993" name="Gene">
        <title>Cloning and sequencing of the Klebsiella pneumoniae tonB gene and characterization of Escherichia coli-K. pneumoniae TonB hybrid proteins.</title>
        <authorList>
            <person name="Bruske A."/>
            <person name="Anton M."/>
            <person name="Heller K.J."/>
        </authorList>
    </citation>
    <scope>NUCLEOTIDE SEQUENCE [GENOMIC DNA]</scope>
    <source>
        <strain>1033-5P14 / KAY2026</strain>
    </source>
</reference>
<protein>
    <recommendedName>
        <fullName>Protein TonB</fullName>
    </recommendedName>
</protein>
<keyword id="KW-0997">Cell inner membrane</keyword>
<keyword id="KW-1003">Cell membrane</keyword>
<keyword id="KW-0472">Membrane</keyword>
<keyword id="KW-0653">Protein transport</keyword>
<keyword id="KW-0677">Repeat</keyword>
<keyword id="KW-0735">Signal-anchor</keyword>
<keyword id="KW-0812">Transmembrane</keyword>
<keyword id="KW-1133">Transmembrane helix</keyword>
<keyword id="KW-0813">Transport</keyword>
<comment type="function">
    <text evidence="1">Interacts with outer membrane receptor proteins that carry out high-affinity binding and energy dependent uptake into the periplasmic space of specific substrates. It could act to transduce energy from the cytoplasmic membrane to specific energy-requiring processes in the outer membrane, resulting in the release into the periplasm of ligands bound by these outer membrane proteins (By similarity).</text>
</comment>
<comment type="subunit">
    <text evidence="1">Homodimer. Forms a complex with the accessory proteins ExbB and ExbD (By similarity).</text>
</comment>
<comment type="subcellular location">
    <subcellularLocation>
        <location>Cell inner membrane</location>
        <topology>Single-pass membrane protein</topology>
        <orientation>Periplasmic side</orientation>
    </subcellularLocation>
</comment>
<comment type="similarity">
    <text evidence="5">Belongs to the TonB family.</text>
</comment>
<sequence>MTLDLPRRFPWPTLLSVAIHGAVVAGLLYTSVHQVIEQPSPTQPIEITMVAPADLEPPPAQPVVEPVVEPEPEPEPEVVPEPPKEAVVIHKPEPKPKPKPKPKPKPEKKVEQPKREVKPAAEPRPASPFENNNTAPARTAPSTSTAAAKPTVTAPSGPRAISRVQPSYPARAQALRIEGTVRVKFDVSPDGRIDNLQILSAQPANMFEREVKSAMRRWRYQQGRPGTGVTMTIKFRLNGVEIN</sequence>
<accession>P45610</accession>
<evidence type="ECO:0000250" key="1"/>
<evidence type="ECO:0000255" key="2"/>
<evidence type="ECO:0000255" key="3">
    <source>
        <dbReference type="PROSITE-ProRule" id="PRU01359"/>
    </source>
</evidence>
<evidence type="ECO:0000256" key="4">
    <source>
        <dbReference type="SAM" id="MobiDB-lite"/>
    </source>
</evidence>
<evidence type="ECO:0000305" key="5"/>
<gene>
    <name type="primary">tonB</name>
</gene>
<dbReference type="EMBL" id="X68478">
    <property type="protein sequence ID" value="CAA48498.1"/>
    <property type="molecule type" value="Genomic_DNA"/>
</dbReference>
<dbReference type="PIR" id="JN0788">
    <property type="entry name" value="JN0788"/>
</dbReference>
<dbReference type="SMR" id="P45610"/>
<dbReference type="PHI-base" id="PHI:6651"/>
<dbReference type="GO" id="GO:0030288">
    <property type="term" value="C:outer membrane-bounded periplasmic space"/>
    <property type="evidence" value="ECO:0007669"/>
    <property type="project" value="InterPro"/>
</dbReference>
<dbReference type="GO" id="GO:0098797">
    <property type="term" value="C:plasma membrane protein complex"/>
    <property type="evidence" value="ECO:0007669"/>
    <property type="project" value="TreeGrafter"/>
</dbReference>
<dbReference type="GO" id="GO:0031992">
    <property type="term" value="F:energy transducer activity"/>
    <property type="evidence" value="ECO:0007669"/>
    <property type="project" value="InterPro"/>
</dbReference>
<dbReference type="GO" id="GO:0015031">
    <property type="term" value="P:protein transport"/>
    <property type="evidence" value="ECO:0007669"/>
    <property type="project" value="UniProtKB-KW"/>
</dbReference>
<dbReference type="GO" id="GO:0015891">
    <property type="term" value="P:siderophore transport"/>
    <property type="evidence" value="ECO:0007669"/>
    <property type="project" value="InterPro"/>
</dbReference>
<dbReference type="GO" id="GO:0055085">
    <property type="term" value="P:transmembrane transport"/>
    <property type="evidence" value="ECO:0007669"/>
    <property type="project" value="InterPro"/>
</dbReference>
<dbReference type="Gene3D" id="3.30.2420.10">
    <property type="entry name" value="TonB"/>
    <property type="match status" value="1"/>
</dbReference>
<dbReference type="InterPro" id="IPR003538">
    <property type="entry name" value="TonB"/>
</dbReference>
<dbReference type="InterPro" id="IPR051045">
    <property type="entry name" value="TonB-dependent_transducer"/>
</dbReference>
<dbReference type="InterPro" id="IPR006260">
    <property type="entry name" value="TonB/TolA_C"/>
</dbReference>
<dbReference type="InterPro" id="IPR037682">
    <property type="entry name" value="TonB_C"/>
</dbReference>
<dbReference type="InterPro" id="IPR049924">
    <property type="entry name" value="TonB_pro-rich"/>
</dbReference>
<dbReference type="NCBIfam" id="NF008081">
    <property type="entry name" value="PRK10819.1-2"/>
    <property type="match status" value="1"/>
</dbReference>
<dbReference type="NCBIfam" id="TIGR01352">
    <property type="entry name" value="tonB_Cterm"/>
    <property type="match status" value="1"/>
</dbReference>
<dbReference type="PANTHER" id="PTHR33446:SF8">
    <property type="entry name" value="PROTEIN TONB"/>
    <property type="match status" value="1"/>
</dbReference>
<dbReference type="PANTHER" id="PTHR33446">
    <property type="entry name" value="PROTEIN TONB-RELATED"/>
    <property type="match status" value="1"/>
</dbReference>
<dbReference type="Pfam" id="PF03544">
    <property type="entry name" value="TonB_C"/>
    <property type="match status" value="1"/>
</dbReference>
<dbReference type="Pfam" id="PF16031">
    <property type="entry name" value="TonB_N"/>
    <property type="match status" value="1"/>
</dbReference>
<dbReference type="PRINTS" id="PR01374">
    <property type="entry name" value="TONBPROTEIN"/>
</dbReference>
<dbReference type="SUPFAM" id="SSF74653">
    <property type="entry name" value="TolA/TonB C-terminal domain"/>
    <property type="match status" value="1"/>
</dbReference>
<dbReference type="PROSITE" id="PS52015">
    <property type="entry name" value="TONB_CTD"/>
    <property type="match status" value="1"/>
</dbReference>